<organism>
    <name type="scientific">Bradyrhizobium diazoefficiens (strain JCM 10833 / BCRC 13528 / IAM 13628 / NBRC 14792 / USDA 110)</name>
    <dbReference type="NCBI Taxonomy" id="224911"/>
    <lineage>
        <taxon>Bacteria</taxon>
        <taxon>Pseudomonadati</taxon>
        <taxon>Pseudomonadota</taxon>
        <taxon>Alphaproteobacteria</taxon>
        <taxon>Hyphomicrobiales</taxon>
        <taxon>Nitrobacteraceae</taxon>
        <taxon>Bradyrhizobium</taxon>
    </lineage>
</organism>
<proteinExistence type="inferred from homology"/>
<name>SYV_BRADU</name>
<keyword id="KW-0030">Aminoacyl-tRNA synthetase</keyword>
<keyword id="KW-0067">ATP-binding</keyword>
<keyword id="KW-0175">Coiled coil</keyword>
<keyword id="KW-0963">Cytoplasm</keyword>
<keyword id="KW-0436">Ligase</keyword>
<keyword id="KW-0547">Nucleotide-binding</keyword>
<keyword id="KW-0648">Protein biosynthesis</keyword>
<keyword id="KW-1185">Reference proteome</keyword>
<feature type="chain" id="PRO_0000224449" description="Valine--tRNA ligase">
    <location>
        <begin position="1"/>
        <end position="958"/>
    </location>
</feature>
<feature type="coiled-coil region" evidence="1">
    <location>
        <begin position="892"/>
        <end position="958"/>
    </location>
</feature>
<feature type="short sequence motif" description="'HIGH' region">
    <location>
        <begin position="45"/>
        <end position="55"/>
    </location>
</feature>
<feature type="short sequence motif" description="'KMSKS' region">
    <location>
        <begin position="571"/>
        <end position="575"/>
    </location>
</feature>
<feature type="binding site" evidence="1">
    <location>
        <position position="574"/>
    </location>
    <ligand>
        <name>ATP</name>
        <dbReference type="ChEBI" id="CHEBI:30616"/>
    </ligand>
</feature>
<dbReference type="EC" id="6.1.1.9" evidence="1"/>
<dbReference type="EMBL" id="BA000040">
    <property type="protein sequence ID" value="BAC49740.1"/>
    <property type="molecule type" value="Genomic_DNA"/>
</dbReference>
<dbReference type="RefSeq" id="NP_771115.1">
    <property type="nucleotide sequence ID" value="NC_004463.1"/>
</dbReference>
<dbReference type="RefSeq" id="WP_011087247.1">
    <property type="nucleotide sequence ID" value="NC_004463.1"/>
</dbReference>
<dbReference type="SMR" id="Q89LR8"/>
<dbReference type="FunCoup" id="Q89LR8">
    <property type="interactions" value="662"/>
</dbReference>
<dbReference type="STRING" id="224911.AAV28_19540"/>
<dbReference type="EnsemblBacteria" id="BAC49740">
    <property type="protein sequence ID" value="BAC49740"/>
    <property type="gene ID" value="BAC49740"/>
</dbReference>
<dbReference type="GeneID" id="46491481"/>
<dbReference type="KEGG" id="bja:blr4475"/>
<dbReference type="PATRIC" id="fig|224911.44.peg.4248"/>
<dbReference type="eggNOG" id="COG0525">
    <property type="taxonomic scope" value="Bacteria"/>
</dbReference>
<dbReference type="HOGENOM" id="CLU_001493_0_2_5"/>
<dbReference type="InParanoid" id="Q89LR8"/>
<dbReference type="OrthoDB" id="9810365at2"/>
<dbReference type="PhylomeDB" id="Q89LR8"/>
<dbReference type="Proteomes" id="UP000002526">
    <property type="component" value="Chromosome"/>
</dbReference>
<dbReference type="GO" id="GO:0005829">
    <property type="term" value="C:cytosol"/>
    <property type="evidence" value="ECO:0000318"/>
    <property type="project" value="GO_Central"/>
</dbReference>
<dbReference type="GO" id="GO:0002161">
    <property type="term" value="F:aminoacyl-tRNA deacylase activity"/>
    <property type="evidence" value="ECO:0007669"/>
    <property type="project" value="InterPro"/>
</dbReference>
<dbReference type="GO" id="GO:0005524">
    <property type="term" value="F:ATP binding"/>
    <property type="evidence" value="ECO:0007669"/>
    <property type="project" value="UniProtKB-UniRule"/>
</dbReference>
<dbReference type="GO" id="GO:0004832">
    <property type="term" value="F:valine-tRNA ligase activity"/>
    <property type="evidence" value="ECO:0000318"/>
    <property type="project" value="GO_Central"/>
</dbReference>
<dbReference type="GO" id="GO:0006438">
    <property type="term" value="P:valyl-tRNA aminoacylation"/>
    <property type="evidence" value="ECO:0000318"/>
    <property type="project" value="GO_Central"/>
</dbReference>
<dbReference type="CDD" id="cd07962">
    <property type="entry name" value="Anticodon_Ia_Val"/>
    <property type="match status" value="1"/>
</dbReference>
<dbReference type="CDD" id="cd00817">
    <property type="entry name" value="ValRS_core"/>
    <property type="match status" value="1"/>
</dbReference>
<dbReference type="FunFam" id="1.10.287.380:FF:000001">
    <property type="entry name" value="Valine--tRNA ligase"/>
    <property type="match status" value="1"/>
</dbReference>
<dbReference type="FunFam" id="3.40.50.620:FF:000032">
    <property type="entry name" value="Valine--tRNA ligase"/>
    <property type="match status" value="1"/>
</dbReference>
<dbReference type="FunFam" id="3.90.740.10:FF:000015">
    <property type="entry name" value="Valine--tRNA ligase"/>
    <property type="match status" value="1"/>
</dbReference>
<dbReference type="FunFam" id="3.40.50.620:FF:000078">
    <property type="entry name" value="Valine--tRNA ligase, mitochondrial"/>
    <property type="match status" value="1"/>
</dbReference>
<dbReference type="Gene3D" id="3.40.50.620">
    <property type="entry name" value="HUPs"/>
    <property type="match status" value="2"/>
</dbReference>
<dbReference type="Gene3D" id="1.10.730.10">
    <property type="entry name" value="Isoleucyl-tRNA Synthetase, Domain 1"/>
    <property type="match status" value="1"/>
</dbReference>
<dbReference type="Gene3D" id="1.10.287.380">
    <property type="entry name" value="Valyl-tRNA synthetase, C-terminal domain"/>
    <property type="match status" value="1"/>
</dbReference>
<dbReference type="Gene3D" id="3.90.740.10">
    <property type="entry name" value="Valyl/Leucyl/Isoleucyl-tRNA synthetase, editing domain"/>
    <property type="match status" value="1"/>
</dbReference>
<dbReference type="HAMAP" id="MF_02004">
    <property type="entry name" value="Val_tRNA_synth_type1"/>
    <property type="match status" value="1"/>
</dbReference>
<dbReference type="InterPro" id="IPR001412">
    <property type="entry name" value="aa-tRNA-synth_I_CS"/>
</dbReference>
<dbReference type="InterPro" id="IPR002300">
    <property type="entry name" value="aa-tRNA-synth_Ia"/>
</dbReference>
<dbReference type="InterPro" id="IPR033705">
    <property type="entry name" value="Anticodon_Ia_Val"/>
</dbReference>
<dbReference type="InterPro" id="IPR013155">
    <property type="entry name" value="M/V/L/I-tRNA-synth_anticd-bd"/>
</dbReference>
<dbReference type="InterPro" id="IPR014729">
    <property type="entry name" value="Rossmann-like_a/b/a_fold"/>
</dbReference>
<dbReference type="InterPro" id="IPR010978">
    <property type="entry name" value="tRNA-bd_arm"/>
</dbReference>
<dbReference type="InterPro" id="IPR009080">
    <property type="entry name" value="tRNAsynth_Ia_anticodon-bd"/>
</dbReference>
<dbReference type="InterPro" id="IPR037118">
    <property type="entry name" value="Val-tRNA_synth_C_sf"/>
</dbReference>
<dbReference type="InterPro" id="IPR019499">
    <property type="entry name" value="Val-tRNA_synth_tRNA-bd"/>
</dbReference>
<dbReference type="InterPro" id="IPR009008">
    <property type="entry name" value="Val/Leu/Ile-tRNA-synth_edit"/>
</dbReference>
<dbReference type="InterPro" id="IPR002303">
    <property type="entry name" value="Valyl-tRNA_ligase"/>
</dbReference>
<dbReference type="NCBIfam" id="NF004349">
    <property type="entry name" value="PRK05729.1"/>
    <property type="match status" value="1"/>
</dbReference>
<dbReference type="NCBIfam" id="TIGR00422">
    <property type="entry name" value="valS"/>
    <property type="match status" value="1"/>
</dbReference>
<dbReference type="PANTHER" id="PTHR11946:SF93">
    <property type="entry name" value="VALINE--TRNA LIGASE, CHLOROPLASTIC_MITOCHONDRIAL 2"/>
    <property type="match status" value="1"/>
</dbReference>
<dbReference type="PANTHER" id="PTHR11946">
    <property type="entry name" value="VALYL-TRNA SYNTHETASES"/>
    <property type="match status" value="1"/>
</dbReference>
<dbReference type="Pfam" id="PF08264">
    <property type="entry name" value="Anticodon_1"/>
    <property type="match status" value="1"/>
</dbReference>
<dbReference type="Pfam" id="PF00133">
    <property type="entry name" value="tRNA-synt_1"/>
    <property type="match status" value="1"/>
</dbReference>
<dbReference type="Pfam" id="PF10458">
    <property type="entry name" value="Val_tRNA-synt_C"/>
    <property type="match status" value="1"/>
</dbReference>
<dbReference type="PRINTS" id="PR00986">
    <property type="entry name" value="TRNASYNTHVAL"/>
</dbReference>
<dbReference type="SUPFAM" id="SSF47323">
    <property type="entry name" value="Anticodon-binding domain of a subclass of class I aminoacyl-tRNA synthetases"/>
    <property type="match status" value="1"/>
</dbReference>
<dbReference type="SUPFAM" id="SSF52374">
    <property type="entry name" value="Nucleotidylyl transferase"/>
    <property type="match status" value="1"/>
</dbReference>
<dbReference type="SUPFAM" id="SSF46589">
    <property type="entry name" value="tRNA-binding arm"/>
    <property type="match status" value="1"/>
</dbReference>
<dbReference type="SUPFAM" id="SSF50677">
    <property type="entry name" value="ValRS/IleRS/LeuRS editing domain"/>
    <property type="match status" value="1"/>
</dbReference>
<dbReference type="PROSITE" id="PS00178">
    <property type="entry name" value="AA_TRNA_LIGASE_I"/>
    <property type="match status" value="1"/>
</dbReference>
<protein>
    <recommendedName>
        <fullName evidence="1">Valine--tRNA ligase</fullName>
        <ecNumber evidence="1">6.1.1.9</ecNumber>
    </recommendedName>
    <alternativeName>
        <fullName evidence="1">Valyl-tRNA synthetase</fullName>
        <shortName evidence="1">ValRS</shortName>
    </alternativeName>
</protein>
<reference key="1">
    <citation type="journal article" date="2002" name="DNA Res.">
        <title>Complete genomic sequence of nitrogen-fixing symbiotic bacterium Bradyrhizobium japonicum USDA110.</title>
        <authorList>
            <person name="Kaneko T."/>
            <person name="Nakamura Y."/>
            <person name="Sato S."/>
            <person name="Minamisawa K."/>
            <person name="Uchiumi T."/>
            <person name="Sasamoto S."/>
            <person name="Watanabe A."/>
            <person name="Idesawa K."/>
            <person name="Iriguchi M."/>
            <person name="Kawashima K."/>
            <person name="Kohara M."/>
            <person name="Matsumoto M."/>
            <person name="Shimpo S."/>
            <person name="Tsuruoka H."/>
            <person name="Wada T."/>
            <person name="Yamada M."/>
            <person name="Tabata S."/>
        </authorList>
    </citation>
    <scope>NUCLEOTIDE SEQUENCE [LARGE SCALE GENOMIC DNA]</scope>
    <source>
        <strain>JCM 10833 / BCRC 13528 / IAM 13628 / NBRC 14792 / USDA 110</strain>
    </source>
</reference>
<sequence length="958" mass="108671">MIEKNYQPADIEARMSVVWEDSLAFKAGRPDRRDAVPFTIVIPPPNVTGSLHMGHALNNTLQDILCRFERMRGRDVLWQPGTDHAGIATQMVVERQLMERQQPGRREMGREKFLERVWQWKAESGDTIINQLKRLGASCDWSRERFTMDEGLSKAVIKVFVELHRDGLIYKDKRLVNWDTKLLTAISDLEVQQTEVKGSLWYLRYPIEGKTFSPEDPSSFIVVATTRPETMLGDTGVAVHPDDERYQKLIGKHVILPLVGRKVEIVADDYSDPEKGSGAVKVTPAHDFNDFEVGNRHGLRRISVLDKEGCLDLLDNEDYLRDLPEGAAQFAEEFNKVDRFVARKRIVERLESFGFVERIEPHTHMVPHGDRSNSVIEPYLTDQWYVDAKTLAKPAIAAVRSGETSFVPKNWEKTYFEWMENIQPWCISRQLWWGHQIPAWYGPDGKVFVAETEEEAISHALGYYVEQEVITAEQGREMALDRNKREGFITRDEDVLDTWFSSALWPFSTLGWPEDAPEVQRYYPTNALVTGFDIIFFWVARMMMMGLHFMKEVPFSTIYIHALVRDEKGAKMSKSKGNVIDPLHLIDEYGADALRFTLAAMAAQGRDIKLATSRVEGYRNFATKLWNASRFAEMNHCAVPEGFEPAKAKETLNRWIAHESAHTTREVTEAIEAYRFNDAAGAIYRFVWNVYCDWYVELAKPVLLGPDSPAKDETRAMVAWARDEILKLLHPFMPFITEELWEVTAKRDGLLALAAWPLKPAEPTPEQLAMFAAAAGPTDPLISPALIVPIFDHADFTDPKAEAEIGWVIDLVTQIRSVRAEMNIPPATLTALVLAGASAETRERAPRWTDVIKRMARLSDISFADRAPDGAVQLLVRGEVAALPLKGVIDVAAERTRLDKEIGKADADIKRAESKLANEKFVANAAEEVVEEEREKREAALARKAKLLEALERLKQAS</sequence>
<gene>
    <name evidence="1" type="primary">valS</name>
    <name type="ordered locus">blr4475</name>
</gene>
<comment type="function">
    <text evidence="1">Catalyzes the attachment of valine to tRNA(Val). As ValRS can inadvertently accommodate and process structurally similar amino acids such as threonine, to avoid such errors, it has a 'posttransfer' editing activity that hydrolyzes mischarged Thr-tRNA(Val) in a tRNA-dependent manner.</text>
</comment>
<comment type="catalytic activity">
    <reaction evidence="1">
        <text>tRNA(Val) + L-valine + ATP = L-valyl-tRNA(Val) + AMP + diphosphate</text>
        <dbReference type="Rhea" id="RHEA:10704"/>
        <dbReference type="Rhea" id="RHEA-COMP:9672"/>
        <dbReference type="Rhea" id="RHEA-COMP:9708"/>
        <dbReference type="ChEBI" id="CHEBI:30616"/>
        <dbReference type="ChEBI" id="CHEBI:33019"/>
        <dbReference type="ChEBI" id="CHEBI:57762"/>
        <dbReference type="ChEBI" id="CHEBI:78442"/>
        <dbReference type="ChEBI" id="CHEBI:78537"/>
        <dbReference type="ChEBI" id="CHEBI:456215"/>
        <dbReference type="EC" id="6.1.1.9"/>
    </reaction>
</comment>
<comment type="subunit">
    <text evidence="1">Monomer.</text>
</comment>
<comment type="subcellular location">
    <subcellularLocation>
        <location evidence="1">Cytoplasm</location>
    </subcellularLocation>
</comment>
<comment type="domain">
    <text evidence="1">ValRS has two distinct active sites: one for aminoacylation and one for editing. The misactivated threonine is translocated from the active site to the editing site.</text>
</comment>
<comment type="domain">
    <text evidence="1">The C-terminal coiled-coil domain is crucial for aminoacylation activity.</text>
</comment>
<comment type="similarity">
    <text evidence="1">Belongs to the class-I aminoacyl-tRNA synthetase family. ValS type 1 subfamily.</text>
</comment>
<evidence type="ECO:0000255" key="1">
    <source>
        <dbReference type="HAMAP-Rule" id="MF_02004"/>
    </source>
</evidence>
<accession>Q89LR8</accession>